<proteinExistence type="inferred from homology"/>
<keyword id="KW-0378">Hydrolase</keyword>
<keyword id="KW-0574">Periplasm</keyword>
<keyword id="KW-0673">Quorum sensing</keyword>
<keyword id="KW-0732">Signal</keyword>
<keyword id="KW-0865">Zymogen</keyword>
<name>QUIP_PSEF5</name>
<evidence type="ECO:0000250" key="1"/>
<evidence type="ECO:0000255" key="2"/>
<evidence type="ECO:0000305" key="3"/>
<dbReference type="EC" id="3.5.1.97"/>
<dbReference type="EMBL" id="CP000076">
    <property type="protein sequence ID" value="AAY90553.1"/>
    <property type="molecule type" value="Genomic_DNA"/>
</dbReference>
<dbReference type="RefSeq" id="WP_011059611.1">
    <property type="nucleotide sequence ID" value="NC_004129.6"/>
</dbReference>
<dbReference type="SMR" id="Q4KH86"/>
<dbReference type="STRING" id="220664.PFL_1268"/>
<dbReference type="MEROPS" id="S45.003"/>
<dbReference type="KEGG" id="pfl:PFL_1268"/>
<dbReference type="PATRIC" id="fig|220664.5.peg.1299"/>
<dbReference type="eggNOG" id="COG2366">
    <property type="taxonomic scope" value="Bacteria"/>
</dbReference>
<dbReference type="HOGENOM" id="CLU_011790_0_1_6"/>
<dbReference type="Proteomes" id="UP000008540">
    <property type="component" value="Chromosome"/>
</dbReference>
<dbReference type="GO" id="GO:0042597">
    <property type="term" value="C:periplasmic space"/>
    <property type="evidence" value="ECO:0007669"/>
    <property type="project" value="UniProtKB-SubCell"/>
</dbReference>
<dbReference type="GO" id="GO:0016811">
    <property type="term" value="F:hydrolase activity, acting on carbon-nitrogen (but not peptide) bonds, in linear amides"/>
    <property type="evidence" value="ECO:0007669"/>
    <property type="project" value="InterPro"/>
</dbReference>
<dbReference type="GO" id="GO:0017000">
    <property type="term" value="P:antibiotic biosynthetic process"/>
    <property type="evidence" value="ECO:0007669"/>
    <property type="project" value="InterPro"/>
</dbReference>
<dbReference type="GO" id="GO:0009372">
    <property type="term" value="P:quorum sensing"/>
    <property type="evidence" value="ECO:0007669"/>
    <property type="project" value="UniProtKB-KW"/>
</dbReference>
<dbReference type="CDD" id="cd03747">
    <property type="entry name" value="Ntn_PGA_like"/>
    <property type="match status" value="1"/>
</dbReference>
<dbReference type="Gene3D" id="1.10.1400.10">
    <property type="match status" value="1"/>
</dbReference>
<dbReference type="Gene3D" id="2.30.120.10">
    <property type="match status" value="1"/>
</dbReference>
<dbReference type="Gene3D" id="3.60.20.10">
    <property type="entry name" value="Glutamine Phosphoribosylpyrophosphate, subunit 1, domain 1"/>
    <property type="match status" value="1"/>
</dbReference>
<dbReference type="Gene3D" id="1.10.439.10">
    <property type="entry name" value="Penicillin Amidohydrolase, domain 1"/>
    <property type="match status" value="1"/>
</dbReference>
<dbReference type="InterPro" id="IPR029055">
    <property type="entry name" value="Ntn_hydrolases_N"/>
</dbReference>
<dbReference type="InterPro" id="IPR014395">
    <property type="entry name" value="Pen/GL7ACA/AHL_acylase"/>
</dbReference>
<dbReference type="InterPro" id="IPR043147">
    <property type="entry name" value="Penicillin_amidase_A-knob"/>
</dbReference>
<dbReference type="InterPro" id="IPR023343">
    <property type="entry name" value="Penicillin_amidase_dom1"/>
</dbReference>
<dbReference type="InterPro" id="IPR043146">
    <property type="entry name" value="Penicillin_amidase_N_B-knob"/>
</dbReference>
<dbReference type="InterPro" id="IPR002692">
    <property type="entry name" value="S45"/>
</dbReference>
<dbReference type="PANTHER" id="PTHR34218:SF4">
    <property type="entry name" value="ACYL-HOMOSERINE LACTONE ACYLASE QUIP"/>
    <property type="match status" value="1"/>
</dbReference>
<dbReference type="PANTHER" id="PTHR34218">
    <property type="entry name" value="PEPTIDASE S45 PENICILLIN AMIDASE"/>
    <property type="match status" value="1"/>
</dbReference>
<dbReference type="Pfam" id="PF01804">
    <property type="entry name" value="Penicil_amidase"/>
    <property type="match status" value="1"/>
</dbReference>
<dbReference type="PIRSF" id="PIRSF001227">
    <property type="entry name" value="Pen_acylase"/>
    <property type="match status" value="1"/>
</dbReference>
<dbReference type="SUPFAM" id="SSF56235">
    <property type="entry name" value="N-terminal nucleophile aminohydrolases (Ntn hydrolases)"/>
    <property type="match status" value="1"/>
</dbReference>
<reference key="1">
    <citation type="journal article" date="2005" name="Nat. Biotechnol.">
        <title>Complete genome sequence of the plant commensal Pseudomonas fluorescens Pf-5.</title>
        <authorList>
            <person name="Paulsen I.T."/>
            <person name="Press C.M."/>
            <person name="Ravel J."/>
            <person name="Kobayashi D.Y."/>
            <person name="Myers G.S.A."/>
            <person name="Mavrodi D.V."/>
            <person name="DeBoy R.T."/>
            <person name="Seshadri R."/>
            <person name="Ren Q."/>
            <person name="Madupu R."/>
            <person name="Dodson R.J."/>
            <person name="Durkin A.S."/>
            <person name="Brinkac L.M."/>
            <person name="Daugherty S.C."/>
            <person name="Sullivan S.A."/>
            <person name="Rosovitz M.J."/>
            <person name="Gwinn M.L."/>
            <person name="Zhou L."/>
            <person name="Schneider D.J."/>
            <person name="Cartinhour S.W."/>
            <person name="Nelson W.C."/>
            <person name="Weidman J."/>
            <person name="Watkins K."/>
            <person name="Tran K."/>
            <person name="Khouri H."/>
            <person name="Pierson E.A."/>
            <person name="Pierson L.S. III"/>
            <person name="Thomashow L.S."/>
            <person name="Loper J.E."/>
        </authorList>
    </citation>
    <scope>NUCLEOTIDE SEQUENCE [LARGE SCALE GENOMIC DNA]</scope>
    <source>
        <strain>ATCC BAA-477 / NRRL B-23932 / Pf-5</strain>
    </source>
</reference>
<comment type="function">
    <text evidence="1">Catalyzes the deacylation of acyl-homoserine lactone (AHL or acyl-HSL), releasing homoserine lactone (HSL) and the corresponding fatty acid. Possesses a specificity for the degradation of long-chain acyl-HSLs (side chains of seven or more carbons in length) (By similarity).</text>
</comment>
<comment type="catalytic activity">
    <reaction>
        <text>an N-acyl-L-homoserine lactone + H2O = L-homoserine lactone + a carboxylate</text>
        <dbReference type="Rhea" id="RHEA:18937"/>
        <dbReference type="ChEBI" id="CHEBI:15377"/>
        <dbReference type="ChEBI" id="CHEBI:29067"/>
        <dbReference type="ChEBI" id="CHEBI:55474"/>
        <dbReference type="ChEBI" id="CHEBI:58633"/>
        <dbReference type="EC" id="3.5.1.97"/>
    </reaction>
</comment>
<comment type="subunit">
    <text evidence="1">Heterodimer of an alpha subunit and a beta subunit processed from the same precursor.</text>
</comment>
<comment type="subcellular location">
    <subcellularLocation>
        <location evidence="3">Periplasm</location>
    </subcellularLocation>
</comment>
<comment type="miscellaneous">
    <text>AHL-mediated signaling mediates quorum sensing in many species of Proteobacteria, regulating hundreds of genes, including many that code for extracellular virulence factors.</text>
</comment>
<comment type="similarity">
    <text evidence="3">Belongs to the peptidase S45 family.</text>
</comment>
<sequence length="809" mass="88603">MASPAFSHFLPRFGVAAAVASALSLAGCQSWNTQDTLPPTSGVQPLKGLAQNVSVRRNAVGVPLIESSSFHDALFTLGYVHASDRIGQMVTLHLLAQGRLAEMSGADALEVDRLMRAINLKKSADELYKASSPRIKRFFEVYARGVNAYLFRYRDKLPPDLAAQGYTPEYWKAEDSALIFCLLNFGQSANLQEEINALVLAQKVGSDKLPWLTPSYPDEPLPLAEADKLKGLNLTVPGLNEVSRAINRLAQLNSLGTRGGSNLAIAPQRSRTGRSLLAADSHLQAWYYTQIRAPKYQAAGASIAGLPAILQGFNGKVAWSMSSVEGDNQDLFLEKLKRQGNALYYQNNGKWQPVTVRNETYFVKGQRPIREAVYETRHGPLLNSALGAALGNGFGLALQTPELKDDKTLDAFFDLSRAQNVEKASDASREIRAIALNMVFADASNIGWQVTGRFPNRREGEGLLPSPGWDGRYDWDGYADPMLHPYDQDPPQGWIATANQRVISQGYGMQLSNSWHAPERAERMAGLASSGKQDNRSLIALQYDQSTLFAAKLKKMFEAPGMAQPLKQAIEALPDTERAKAREAYSRLLAFDGKVSAGSADAALYELFLQESAKQIFLDKLGPESSDAWQAFVANGNLSYSAQADHLLGQEDSPFWDDSRTAQKEDKPAILARSLAAAISSGEQLLGADRKAWQWGKLHSYQWTNANGRQIRGPLQAGGDHNTINSAAYRWGQDFAITDTPALRLIVDFSLSEPLMGLNSSGQSGNPVSPNYANGIDGWLKAQYLSLPMQPQNFERSYGKTRLTLVPGK</sequence>
<organism>
    <name type="scientific">Pseudomonas fluorescens (strain ATCC BAA-477 / NRRL B-23932 / Pf-5)</name>
    <dbReference type="NCBI Taxonomy" id="220664"/>
    <lineage>
        <taxon>Bacteria</taxon>
        <taxon>Pseudomonadati</taxon>
        <taxon>Pseudomonadota</taxon>
        <taxon>Gammaproteobacteria</taxon>
        <taxon>Pseudomonadales</taxon>
        <taxon>Pseudomonadaceae</taxon>
        <taxon>Pseudomonas</taxon>
    </lineage>
</organism>
<gene>
    <name type="primary">quiP</name>
    <name type="ordered locus">PFL_1268</name>
</gene>
<feature type="signal peptide" evidence="2">
    <location>
        <begin position="1"/>
        <end position="26"/>
    </location>
</feature>
<feature type="chain" id="PRO_0000253385" description="Acyl-homoserine lactone acylase QuiP">
    <location>
        <begin position="27"/>
        <end position="809"/>
    </location>
</feature>
<feature type="chain" id="PRO_0000253386" description="Acyl-homoserine lactone acylase QuiP subunit alpha">
    <location>
        <begin position="27"/>
        <end status="unknown"/>
    </location>
</feature>
<feature type="propeptide" id="PRO_0000253387" description="Spacer peptide" evidence="1">
    <location>
        <begin status="unknown"/>
        <end position="260"/>
    </location>
</feature>
<feature type="chain" id="PRO_0000253388" description="Acyl-homoserine lactone acylase QuiP subunit beta">
    <location>
        <begin position="261"/>
        <end position="809"/>
    </location>
</feature>
<feature type="active site" description="Nucleophile" evidence="1">
    <location>
        <position position="261"/>
    </location>
</feature>
<protein>
    <recommendedName>
        <fullName>Acyl-homoserine lactone acylase QuiP</fullName>
        <shortName>AHL acylase QuiP</shortName>
        <shortName>Acyl-HSL acylase QuiP</shortName>
        <ecNumber>3.5.1.97</ecNumber>
    </recommendedName>
    <component>
        <recommendedName>
            <fullName>Acyl-homoserine lactone acylase QuiP subunit alpha</fullName>
            <shortName>Acyl-HSL acylase QuiP subunit alpha</shortName>
        </recommendedName>
    </component>
    <component>
        <recommendedName>
            <fullName>Acyl-homoserine lactone acylase QuiP subunit beta</fullName>
            <shortName>Acyl-HSL acylase QuiP subunit beta</shortName>
        </recommendedName>
    </component>
</protein>
<accession>Q4KH86</accession>